<sequence>MSATELFARRATLARSVRLLSEFRFEQSDPARFYGALADDTAAMVADLWQAATETTPGGRTVLDVGGGPGFFAAAFARRGMEYVGVEPDPREMHAGPAAQAGGRYVRASGTSLPFADGSVDVCLSSNVAEHVPDPWRLGNEMVRVTRPGGLAVLSYTVWLGPFGGHEMGLTHYLGGARAADRYTRKHGHRPKNDYGSSLFAVSAHDGLEWAASTGALIAAFPRYHPRWAWWTNAVPGLREFVVSNQVLVLQP</sequence>
<keyword id="KW-0489">Methyltransferase</keyword>
<keyword id="KW-0808">Transferase</keyword>
<proteinExistence type="inferred from homology"/>
<dbReference type="EC" id="2.1.1.-"/>
<dbReference type="EMBL" id="CP000580">
    <property type="protein sequence ID" value="ABN96021.1"/>
    <property type="molecule type" value="Genomic_DNA"/>
</dbReference>
<dbReference type="SMR" id="A3PSZ4"/>
<dbReference type="KEGG" id="mjl:Mjls_0208"/>
<dbReference type="HOGENOM" id="CLU_073035_0_0_11"/>
<dbReference type="BioCyc" id="MSP164757:G1G8C-213-MONOMER"/>
<dbReference type="GO" id="GO:0008757">
    <property type="term" value="F:S-adenosylmethionine-dependent methyltransferase activity"/>
    <property type="evidence" value="ECO:0007669"/>
    <property type="project" value="InterPro"/>
</dbReference>
<dbReference type="GO" id="GO:0032259">
    <property type="term" value="P:methylation"/>
    <property type="evidence" value="ECO:0007669"/>
    <property type="project" value="UniProtKB-KW"/>
</dbReference>
<dbReference type="CDD" id="cd02440">
    <property type="entry name" value="AdoMet_MTases"/>
    <property type="match status" value="1"/>
</dbReference>
<dbReference type="Gene3D" id="3.40.50.150">
    <property type="entry name" value="Vaccinia Virus protein VP39"/>
    <property type="match status" value="1"/>
</dbReference>
<dbReference type="InterPro" id="IPR013216">
    <property type="entry name" value="Methyltransf_11"/>
</dbReference>
<dbReference type="InterPro" id="IPR029063">
    <property type="entry name" value="SAM-dependent_MTases_sf"/>
</dbReference>
<dbReference type="PANTHER" id="PTHR43591:SF24">
    <property type="entry name" value="2-METHOXY-6-POLYPRENYL-1,4-BENZOQUINOL METHYLASE, MITOCHONDRIAL"/>
    <property type="match status" value="1"/>
</dbReference>
<dbReference type="PANTHER" id="PTHR43591">
    <property type="entry name" value="METHYLTRANSFERASE"/>
    <property type="match status" value="1"/>
</dbReference>
<dbReference type="Pfam" id="PF08241">
    <property type="entry name" value="Methyltransf_11"/>
    <property type="match status" value="1"/>
</dbReference>
<dbReference type="SUPFAM" id="SSF53335">
    <property type="entry name" value="S-adenosyl-L-methionine-dependent methyltransferases"/>
    <property type="match status" value="1"/>
</dbReference>
<accession>A3PSZ4</accession>
<organism>
    <name type="scientific">Mycobacterium sp. (strain JLS)</name>
    <dbReference type="NCBI Taxonomy" id="164757"/>
    <lineage>
        <taxon>Bacteria</taxon>
        <taxon>Bacillati</taxon>
        <taxon>Actinomycetota</taxon>
        <taxon>Actinomycetes</taxon>
        <taxon>Mycobacteriales</taxon>
        <taxon>Mycobacteriaceae</taxon>
        <taxon>Mycobacterium</taxon>
    </lineage>
</organism>
<name>Y208_MYCSJ</name>
<protein>
    <recommendedName>
        <fullName>Uncharacterized methyltransferase Mjls_0208</fullName>
        <ecNumber>2.1.1.-</ecNumber>
    </recommendedName>
</protein>
<evidence type="ECO:0000305" key="1"/>
<feature type="chain" id="PRO_0000380605" description="Uncharacterized methyltransferase Mjls_0208">
    <location>
        <begin position="1"/>
        <end position="252"/>
    </location>
</feature>
<comment type="similarity">
    <text evidence="1">Belongs to the methyltransferase superfamily.</text>
</comment>
<gene>
    <name type="ordered locus">Mjls_0208</name>
</gene>
<reference key="1">
    <citation type="submission" date="2007-02" db="EMBL/GenBank/DDBJ databases">
        <title>Complete sequence of Mycobacterium sp. JLS.</title>
        <authorList>
            <consortium name="US DOE Joint Genome Institute"/>
            <person name="Copeland A."/>
            <person name="Lucas S."/>
            <person name="Lapidus A."/>
            <person name="Barry K."/>
            <person name="Detter J.C."/>
            <person name="Glavina del Rio T."/>
            <person name="Hammon N."/>
            <person name="Israni S."/>
            <person name="Dalin E."/>
            <person name="Tice H."/>
            <person name="Pitluck S."/>
            <person name="Chain P."/>
            <person name="Malfatti S."/>
            <person name="Shin M."/>
            <person name="Vergez L."/>
            <person name="Schmutz J."/>
            <person name="Larimer F."/>
            <person name="Land M."/>
            <person name="Hauser L."/>
            <person name="Kyrpides N."/>
            <person name="Mikhailova N."/>
            <person name="Miller C.D."/>
            <person name="Anderson A.J."/>
            <person name="Sims R.C."/>
            <person name="Richardson P."/>
        </authorList>
    </citation>
    <scope>NUCLEOTIDE SEQUENCE [LARGE SCALE GENOMIC DNA]</scope>
    <source>
        <strain>JLS</strain>
    </source>
</reference>